<evidence type="ECO:0000255" key="1"/>
<evidence type="ECO:0000255" key="2">
    <source>
        <dbReference type="PROSITE-ProRule" id="PRU00159"/>
    </source>
</evidence>
<evidence type="ECO:0000255" key="3">
    <source>
        <dbReference type="PROSITE-ProRule" id="PRU10027"/>
    </source>
</evidence>
<evidence type="ECO:0000269" key="4">
    <source>
    </source>
</evidence>
<evidence type="ECO:0000305" key="5"/>
<evidence type="ECO:0000305" key="6">
    <source>
    </source>
</evidence>
<feature type="signal peptide" evidence="1">
    <location>
        <begin position="1"/>
        <end position="24"/>
    </location>
</feature>
<feature type="chain" id="PRO_0000312029" description="Receptor-like protein kinase HERK 1">
    <location>
        <begin position="25"/>
        <end position="830"/>
    </location>
</feature>
<feature type="topological domain" description="Extracellular" evidence="1">
    <location>
        <begin position="25"/>
        <end position="405"/>
    </location>
</feature>
<feature type="transmembrane region" description="Helical" evidence="1">
    <location>
        <begin position="406"/>
        <end position="426"/>
    </location>
</feature>
<feature type="topological domain" description="Cytoplasmic" evidence="1">
    <location>
        <begin position="427"/>
        <end position="830"/>
    </location>
</feature>
<feature type="domain" description="Protein kinase" evidence="2">
    <location>
        <begin position="485"/>
        <end position="758"/>
    </location>
</feature>
<feature type="active site" description="Proton acceptor" evidence="2 3">
    <location>
        <position position="609"/>
    </location>
</feature>
<feature type="binding site" evidence="2">
    <location>
        <begin position="491"/>
        <end position="499"/>
    </location>
    <ligand>
        <name>ATP</name>
        <dbReference type="ChEBI" id="CHEBI:30616"/>
    </ligand>
</feature>
<feature type="binding site" evidence="5">
    <location>
        <position position="513"/>
    </location>
    <ligand>
        <name>ATP</name>
        <dbReference type="ChEBI" id="CHEBI:30616"/>
    </ligand>
</feature>
<feature type="glycosylation site" description="N-linked (GlcNAc...) asparagine" evidence="1">
    <location>
        <position position="40"/>
    </location>
</feature>
<feature type="glycosylation site" description="N-linked (GlcNAc...) asparagine" evidence="1">
    <location>
        <position position="146"/>
    </location>
</feature>
<feature type="glycosylation site" description="N-linked (GlcNAc...) asparagine" evidence="1">
    <location>
        <position position="217"/>
    </location>
</feature>
<feature type="glycosylation site" description="N-linked (GlcNAc...) asparagine" evidence="1">
    <location>
        <position position="280"/>
    </location>
</feature>
<feature type="glycosylation site" description="N-linked (GlcNAc...) asparagine" evidence="1">
    <location>
        <position position="381"/>
    </location>
</feature>
<feature type="mutagenesis site" description="Loss of kinase activity." evidence="4">
    <original>K</original>
    <variation>R</variation>
    <location>
        <position position="513"/>
    </location>
</feature>
<protein>
    <recommendedName>
        <fullName>Receptor-like protein kinase HERK 1</fullName>
        <ecNumber>2.7.11.-</ecNumber>
    </recommendedName>
    <alternativeName>
        <fullName>Protein HERCULES RECEPTOR KINASE 1</fullName>
    </alternativeName>
</protein>
<gene>
    <name type="primary">HERK1</name>
    <name type="ordered locus">At3g46290</name>
    <name type="ORF">F12M12.260</name>
    <name type="ORF">F18L15.10</name>
</gene>
<comment type="function">
    <text evidence="4">Receptor-like protein kinase required for cell elongation during vegetative growth, mostly in a brassinosteroid-(BR-) independent manner.</text>
</comment>
<comment type="interaction">
    <interactant intactId="EBI-22028097">
        <id>Q9LX66</id>
    </interactant>
    <interactant intactId="EBI-17071988">
        <id>Q9FN92</id>
        <label>At5g59700</label>
    </interactant>
    <organismsDiffer>false</organismsDiffer>
    <experiments>4</experiments>
</comment>
<comment type="interaction">
    <interactant intactId="EBI-22028097">
        <id>Q9LX66</id>
    </interactant>
    <interactant intactId="EBI-15880405">
        <id>Q9SCZ4</id>
        <label>FER</label>
    </interactant>
    <organismsDiffer>false</organismsDiffer>
    <experiments>5</experiments>
</comment>
<comment type="interaction">
    <interactant intactId="EBI-22028097">
        <id>Q9LX66</id>
    </interactant>
    <interactant intactId="EBI-21914693">
        <id>B3GS44</id>
        <label>LRE</label>
    </interactant>
    <organismsDiffer>false</organismsDiffer>
    <experiments>2</experiments>
</comment>
<comment type="subcellular location">
    <subcellularLocation>
        <location evidence="4 6">Cell membrane</location>
        <topology evidence="4 6">Single-pass type I membrane protein</topology>
    </subcellularLocation>
</comment>
<comment type="tissue specificity">
    <text evidence="4">Expressed in most vegetative tissues, including leaves, stems and roots, especially in cell elongation regions.</text>
</comment>
<comment type="induction">
    <text evidence="4">By brassinosteroids (BR).</text>
</comment>
<comment type="PTM">
    <text>Autophosphorylated.</text>
</comment>
<comment type="disruption phenotype">
    <text evidence="4">No visible phenotype; due to redundancy with THE1. Herk1 and the1 double mutants are stunted. In herk1-1, shorter hypocotyls without brassinolide (BL) treatment than with BL treatment.</text>
</comment>
<comment type="similarity">
    <text evidence="2">Belongs to the protein kinase superfamily. Ser/Thr protein kinase family.</text>
</comment>
<comment type="sequence caution" evidence="5">
    <conflict type="erroneous gene model prediction">
        <sequence resource="EMBL-CDS" id="CAB62020"/>
    </conflict>
</comment>
<name>HERK_ARATH</name>
<dbReference type="EC" id="2.7.11.-"/>
<dbReference type="EMBL" id="AL133298">
    <property type="protein sequence ID" value="CAB62020.1"/>
    <property type="status" value="ALT_SEQ"/>
    <property type="molecule type" value="Genomic_DNA"/>
</dbReference>
<dbReference type="EMBL" id="AL355775">
    <property type="protein sequence ID" value="CAB90956.1"/>
    <property type="molecule type" value="Genomic_DNA"/>
</dbReference>
<dbReference type="EMBL" id="CP002686">
    <property type="protein sequence ID" value="AEE78143.1"/>
    <property type="molecule type" value="Genomic_DNA"/>
</dbReference>
<dbReference type="PIR" id="T45686">
    <property type="entry name" value="T45686"/>
</dbReference>
<dbReference type="PIR" id="T49270">
    <property type="entry name" value="T49270"/>
</dbReference>
<dbReference type="RefSeq" id="NP_190214.1">
    <property type="nucleotide sequence ID" value="NM_114497.4"/>
</dbReference>
<dbReference type="SMR" id="Q9LX66"/>
<dbReference type="BioGRID" id="9094">
    <property type="interactions" value="1"/>
</dbReference>
<dbReference type="FunCoup" id="Q9LX66">
    <property type="interactions" value="662"/>
</dbReference>
<dbReference type="IntAct" id="Q9LX66">
    <property type="interactions" value="3"/>
</dbReference>
<dbReference type="STRING" id="3702.Q9LX66"/>
<dbReference type="GlyCosmos" id="Q9LX66">
    <property type="glycosylation" value="5 sites, No reported glycans"/>
</dbReference>
<dbReference type="GlyGen" id="Q9LX66">
    <property type="glycosylation" value="5 sites"/>
</dbReference>
<dbReference type="iPTMnet" id="Q9LX66"/>
<dbReference type="PaxDb" id="3702-AT3G46290.1"/>
<dbReference type="ProteomicsDB" id="230508"/>
<dbReference type="EnsemblPlants" id="AT3G46290.1">
    <property type="protein sequence ID" value="AT3G46290.1"/>
    <property type="gene ID" value="AT3G46290"/>
</dbReference>
<dbReference type="GeneID" id="823774"/>
<dbReference type="Gramene" id="AT3G46290.1">
    <property type="protein sequence ID" value="AT3G46290.1"/>
    <property type="gene ID" value="AT3G46290"/>
</dbReference>
<dbReference type="KEGG" id="ath:AT3G46290"/>
<dbReference type="Araport" id="AT3G46290"/>
<dbReference type="TAIR" id="AT3G46290">
    <property type="gene designation" value="HERK1"/>
</dbReference>
<dbReference type="eggNOG" id="KOG1187">
    <property type="taxonomic scope" value="Eukaryota"/>
</dbReference>
<dbReference type="HOGENOM" id="CLU_000288_42_1_1"/>
<dbReference type="InParanoid" id="Q9LX66"/>
<dbReference type="OMA" id="CDDKSEM"/>
<dbReference type="PhylomeDB" id="Q9LX66"/>
<dbReference type="PRO" id="PR:Q9LX66"/>
<dbReference type="Proteomes" id="UP000006548">
    <property type="component" value="Chromosome 3"/>
</dbReference>
<dbReference type="ExpressionAtlas" id="Q9LX66">
    <property type="expression patterns" value="baseline and differential"/>
</dbReference>
<dbReference type="GO" id="GO:0005886">
    <property type="term" value="C:plasma membrane"/>
    <property type="evidence" value="ECO:0000314"/>
    <property type="project" value="TAIR"/>
</dbReference>
<dbReference type="GO" id="GO:0009506">
    <property type="term" value="C:plasmodesma"/>
    <property type="evidence" value="ECO:0007005"/>
    <property type="project" value="TAIR"/>
</dbReference>
<dbReference type="GO" id="GO:0005524">
    <property type="term" value="F:ATP binding"/>
    <property type="evidence" value="ECO:0007669"/>
    <property type="project" value="UniProtKB-KW"/>
</dbReference>
<dbReference type="GO" id="GO:0004672">
    <property type="term" value="F:protein kinase activity"/>
    <property type="evidence" value="ECO:0000314"/>
    <property type="project" value="TAIR"/>
</dbReference>
<dbReference type="GO" id="GO:0004674">
    <property type="term" value="F:protein serine/threonine kinase activity"/>
    <property type="evidence" value="ECO:0007669"/>
    <property type="project" value="UniProtKB-KW"/>
</dbReference>
<dbReference type="GO" id="GO:0004714">
    <property type="term" value="F:transmembrane receptor protein tyrosine kinase activity"/>
    <property type="evidence" value="ECO:0007669"/>
    <property type="project" value="InterPro"/>
</dbReference>
<dbReference type="GO" id="GO:0009741">
    <property type="term" value="P:response to brassinosteroid"/>
    <property type="evidence" value="ECO:0000316"/>
    <property type="project" value="TAIR"/>
</dbReference>
<dbReference type="GO" id="GO:0009826">
    <property type="term" value="P:unidimensional cell growth"/>
    <property type="evidence" value="ECO:0000316"/>
    <property type="project" value="TAIR"/>
</dbReference>
<dbReference type="CDD" id="cd14066">
    <property type="entry name" value="STKc_IRAK"/>
    <property type="match status" value="1"/>
</dbReference>
<dbReference type="FunFam" id="2.60.120.430:FF:000005">
    <property type="entry name" value="Putative receptor-like protein kinase"/>
    <property type="match status" value="1"/>
</dbReference>
<dbReference type="FunFam" id="1.10.510.10:FF:000058">
    <property type="entry name" value="Receptor-like protein kinase FERONIA"/>
    <property type="match status" value="1"/>
</dbReference>
<dbReference type="FunFam" id="2.60.120.430:FF:000001">
    <property type="entry name" value="Receptor-like protein kinase FERONIA"/>
    <property type="match status" value="1"/>
</dbReference>
<dbReference type="FunFam" id="3.30.200.20:FF:000039">
    <property type="entry name" value="receptor-like protein kinase FERONIA"/>
    <property type="match status" value="1"/>
</dbReference>
<dbReference type="Gene3D" id="2.60.120.430">
    <property type="entry name" value="Galactose-binding lectin"/>
    <property type="match status" value="2"/>
</dbReference>
<dbReference type="Gene3D" id="3.30.200.20">
    <property type="entry name" value="Phosphorylase Kinase, domain 1"/>
    <property type="match status" value="1"/>
</dbReference>
<dbReference type="Gene3D" id="1.10.510.10">
    <property type="entry name" value="Transferase(Phosphotransferase) domain 1"/>
    <property type="match status" value="1"/>
</dbReference>
<dbReference type="InterPro" id="IPR045272">
    <property type="entry name" value="ANXUR1/2-like"/>
</dbReference>
<dbReference type="InterPro" id="IPR011009">
    <property type="entry name" value="Kinase-like_dom_sf"/>
</dbReference>
<dbReference type="InterPro" id="IPR024788">
    <property type="entry name" value="Malectin-like_Carb-bd_dom"/>
</dbReference>
<dbReference type="InterPro" id="IPR000719">
    <property type="entry name" value="Prot_kinase_dom"/>
</dbReference>
<dbReference type="InterPro" id="IPR017441">
    <property type="entry name" value="Protein_kinase_ATP_BS"/>
</dbReference>
<dbReference type="InterPro" id="IPR001245">
    <property type="entry name" value="Ser-Thr/Tyr_kinase_cat_dom"/>
</dbReference>
<dbReference type="InterPro" id="IPR008271">
    <property type="entry name" value="Ser/Thr_kinase_AS"/>
</dbReference>
<dbReference type="PANTHER" id="PTHR27003">
    <property type="entry name" value="OS07G0166700 PROTEIN"/>
    <property type="match status" value="1"/>
</dbReference>
<dbReference type="PANTHER" id="PTHR27003:SF426">
    <property type="entry name" value="RECEPTOR-LIKE PROTEIN KINASE HERK 1"/>
    <property type="match status" value="1"/>
</dbReference>
<dbReference type="Pfam" id="PF12819">
    <property type="entry name" value="Malectin_like"/>
    <property type="match status" value="1"/>
</dbReference>
<dbReference type="Pfam" id="PF07714">
    <property type="entry name" value="PK_Tyr_Ser-Thr"/>
    <property type="match status" value="1"/>
</dbReference>
<dbReference type="SMART" id="SM00220">
    <property type="entry name" value="S_TKc"/>
    <property type="match status" value="1"/>
</dbReference>
<dbReference type="SUPFAM" id="SSF56112">
    <property type="entry name" value="Protein kinase-like (PK-like)"/>
    <property type="match status" value="1"/>
</dbReference>
<dbReference type="PROSITE" id="PS00107">
    <property type="entry name" value="PROTEIN_KINASE_ATP"/>
    <property type="match status" value="1"/>
</dbReference>
<dbReference type="PROSITE" id="PS50011">
    <property type="entry name" value="PROTEIN_KINASE_DOM"/>
    <property type="match status" value="1"/>
</dbReference>
<dbReference type="PROSITE" id="PS00108">
    <property type="entry name" value="PROTEIN_KINASE_ST"/>
    <property type="match status" value="1"/>
</dbReference>
<reference key="1">
    <citation type="journal article" date="2000" name="Nature">
        <title>Sequence and analysis of chromosome 3 of the plant Arabidopsis thaliana.</title>
        <authorList>
            <person name="Salanoubat M."/>
            <person name="Lemcke K."/>
            <person name="Rieger M."/>
            <person name="Ansorge W."/>
            <person name="Unseld M."/>
            <person name="Fartmann B."/>
            <person name="Valle G."/>
            <person name="Bloecker H."/>
            <person name="Perez-Alonso M."/>
            <person name="Obermaier B."/>
            <person name="Delseny M."/>
            <person name="Boutry M."/>
            <person name="Grivell L.A."/>
            <person name="Mache R."/>
            <person name="Puigdomenech P."/>
            <person name="De Simone V."/>
            <person name="Choisne N."/>
            <person name="Artiguenave F."/>
            <person name="Robert C."/>
            <person name="Brottier P."/>
            <person name="Wincker P."/>
            <person name="Cattolico L."/>
            <person name="Weissenbach J."/>
            <person name="Saurin W."/>
            <person name="Quetier F."/>
            <person name="Schaefer M."/>
            <person name="Mueller-Auer S."/>
            <person name="Gabel C."/>
            <person name="Fuchs M."/>
            <person name="Benes V."/>
            <person name="Wurmbach E."/>
            <person name="Drzonek H."/>
            <person name="Erfle H."/>
            <person name="Jordan N."/>
            <person name="Bangert S."/>
            <person name="Wiedelmann R."/>
            <person name="Kranz H."/>
            <person name="Voss H."/>
            <person name="Holland R."/>
            <person name="Brandt P."/>
            <person name="Nyakatura G."/>
            <person name="Vezzi A."/>
            <person name="D'Angelo M."/>
            <person name="Pallavicini A."/>
            <person name="Toppo S."/>
            <person name="Simionati B."/>
            <person name="Conrad A."/>
            <person name="Hornischer K."/>
            <person name="Kauer G."/>
            <person name="Loehnert T.-H."/>
            <person name="Nordsiek G."/>
            <person name="Reichelt J."/>
            <person name="Scharfe M."/>
            <person name="Schoen O."/>
            <person name="Bargues M."/>
            <person name="Terol J."/>
            <person name="Climent J."/>
            <person name="Navarro P."/>
            <person name="Collado C."/>
            <person name="Perez-Perez A."/>
            <person name="Ottenwaelder B."/>
            <person name="Duchemin D."/>
            <person name="Cooke R."/>
            <person name="Laudie M."/>
            <person name="Berger-Llauro C."/>
            <person name="Purnelle B."/>
            <person name="Masuy D."/>
            <person name="de Haan M."/>
            <person name="Maarse A.C."/>
            <person name="Alcaraz J.-P."/>
            <person name="Cottet A."/>
            <person name="Casacuberta E."/>
            <person name="Monfort A."/>
            <person name="Argiriou A."/>
            <person name="Flores M."/>
            <person name="Liguori R."/>
            <person name="Vitale D."/>
            <person name="Mannhaupt G."/>
            <person name="Haase D."/>
            <person name="Schoof H."/>
            <person name="Rudd S."/>
            <person name="Zaccaria P."/>
            <person name="Mewes H.-W."/>
            <person name="Mayer K.F.X."/>
            <person name="Kaul S."/>
            <person name="Town C.D."/>
            <person name="Koo H.L."/>
            <person name="Tallon L.J."/>
            <person name="Jenkins J."/>
            <person name="Rooney T."/>
            <person name="Rizzo M."/>
            <person name="Walts A."/>
            <person name="Utterback T."/>
            <person name="Fujii C.Y."/>
            <person name="Shea T.P."/>
            <person name="Creasy T.H."/>
            <person name="Haas B."/>
            <person name="Maiti R."/>
            <person name="Wu D."/>
            <person name="Peterson J."/>
            <person name="Van Aken S."/>
            <person name="Pai G."/>
            <person name="Militscher J."/>
            <person name="Sellers P."/>
            <person name="Gill J.E."/>
            <person name="Feldblyum T.V."/>
            <person name="Preuss D."/>
            <person name="Lin X."/>
            <person name="Nierman W.C."/>
            <person name="Salzberg S.L."/>
            <person name="White O."/>
            <person name="Venter J.C."/>
            <person name="Fraser C.M."/>
            <person name="Kaneko T."/>
            <person name="Nakamura Y."/>
            <person name="Sato S."/>
            <person name="Kato T."/>
            <person name="Asamizu E."/>
            <person name="Sasamoto S."/>
            <person name="Kimura T."/>
            <person name="Idesawa K."/>
            <person name="Kawashima K."/>
            <person name="Kishida Y."/>
            <person name="Kiyokawa C."/>
            <person name="Kohara M."/>
            <person name="Matsumoto M."/>
            <person name="Matsuno A."/>
            <person name="Muraki A."/>
            <person name="Nakayama S."/>
            <person name="Nakazaki N."/>
            <person name="Shinpo S."/>
            <person name="Takeuchi C."/>
            <person name="Wada T."/>
            <person name="Watanabe A."/>
            <person name="Yamada M."/>
            <person name="Yasuda M."/>
            <person name="Tabata S."/>
        </authorList>
    </citation>
    <scope>NUCLEOTIDE SEQUENCE [LARGE SCALE GENOMIC DNA]</scope>
    <source>
        <strain>cv. Columbia</strain>
    </source>
</reference>
<reference key="2">
    <citation type="journal article" date="2017" name="Plant J.">
        <title>Araport11: a complete reannotation of the Arabidopsis thaliana reference genome.</title>
        <authorList>
            <person name="Cheng C.Y."/>
            <person name="Krishnakumar V."/>
            <person name="Chan A.P."/>
            <person name="Thibaud-Nissen F."/>
            <person name="Schobel S."/>
            <person name="Town C.D."/>
        </authorList>
    </citation>
    <scope>GENOME REANNOTATION</scope>
    <source>
        <strain>cv. Columbia</strain>
    </source>
</reference>
<reference key="3">
    <citation type="journal article" date="2003" name="Mol. Cell. Proteomics">
        <title>Large-scale analysis of in vivo phosphorylated membrane proteins by immobilized metal ion affinity chromatography and mass spectrometry.</title>
        <authorList>
            <person name="Nuehse T.S."/>
            <person name="Stensballe A."/>
            <person name="Jensen O.N."/>
            <person name="Peck S.C."/>
        </authorList>
    </citation>
    <scope>IDENTIFICATION BY MASS SPECTROMETRY [LARGE SCALE ANALYSIS]</scope>
    <source>
        <strain>cv. La-0</strain>
    </source>
</reference>
<reference key="4">
    <citation type="journal article" date="2004" name="Plant Cell">
        <title>Phosphoproteomics of the Arabidopsis plasma membrane and a new phosphorylation site database.</title>
        <authorList>
            <person name="Nuehse T.S."/>
            <person name="Stensballe A."/>
            <person name="Jensen O.N."/>
            <person name="Peck S.C."/>
        </authorList>
    </citation>
    <scope>IDENTIFICATION BY MASS SPECTROMETRY [LARGE SCALE ANALYSIS]</scope>
</reference>
<reference key="5">
    <citation type="journal article" date="2007" name="Mol. Cell. Proteomics">
        <title>A high content in lipid-modified peripheral proteins and integral receptor kinases features in the arabidopsis plasma membrane proteome.</title>
        <authorList>
            <person name="Marmagne A."/>
            <person name="Ferro M."/>
            <person name="Meinnel T."/>
            <person name="Bruley C."/>
            <person name="Kuhn L."/>
            <person name="Garin J."/>
            <person name="Barbier-Brygoo H."/>
            <person name="Ephritikhine G."/>
        </authorList>
    </citation>
    <scope>IDENTIFICATION BY MASS SPECTROMETRY</scope>
    <scope>SUBCELLULAR LOCATION [LARGE SCALE ANALYSIS]</scope>
</reference>
<reference key="6">
    <citation type="journal article" date="2009" name="Mol. Plant">
        <title>Diverse transcriptional programs associated with environmental stress and hormones in the Arabidopsis receptor-like kinase gene family.</title>
        <authorList>
            <person name="Chae L."/>
            <person name="Sudat S."/>
            <person name="Dudoit S."/>
            <person name="Zhu T."/>
            <person name="Luan S."/>
        </authorList>
    </citation>
    <scope>GENE FAMILY</scope>
</reference>
<reference key="7">
    <citation type="journal article" date="2009" name="Proc. Natl. Acad. Sci. U.S.A.">
        <title>Three related receptor-like kinases are required for optimal cell elongation in Arabidopsis thaliana.</title>
        <authorList>
            <person name="Guo H."/>
            <person name="Li L."/>
            <person name="Ye H."/>
            <person name="Yu X."/>
            <person name="Algreen A."/>
            <person name="Yin Y."/>
        </authorList>
    </citation>
    <scope>FUNCTION</scope>
    <scope>DISRUPTION PHENOTYPE</scope>
    <scope>AUTOPHOSPHORYLATION</scope>
    <scope>MUTAGENESIS OF LYS-513</scope>
    <scope>TISSUE SPECIFICITY</scope>
    <scope>SUBCELLULAR LOCATION</scope>
    <scope>INDUCTION BY BRASSINOSTEROIDS</scope>
</reference>
<proteinExistence type="evidence at protein level"/>
<keyword id="KW-0067">ATP-binding</keyword>
<keyword id="KW-1003">Cell membrane</keyword>
<keyword id="KW-0325">Glycoprotein</keyword>
<keyword id="KW-0418">Kinase</keyword>
<keyword id="KW-0472">Membrane</keyword>
<keyword id="KW-0547">Nucleotide-binding</keyword>
<keyword id="KW-0597">Phosphoprotein</keyword>
<keyword id="KW-0675">Receptor</keyword>
<keyword id="KW-1185">Reference proteome</keyword>
<keyword id="KW-0723">Serine/threonine-protein kinase</keyword>
<keyword id="KW-0732">Signal</keyword>
<keyword id="KW-0808">Transferase</keyword>
<keyword id="KW-0812">Transmembrane</keyword>
<keyword id="KW-1133">Transmembrane helix</keyword>
<organism>
    <name type="scientific">Arabidopsis thaliana</name>
    <name type="common">Mouse-ear cress</name>
    <dbReference type="NCBI Taxonomy" id="3702"/>
    <lineage>
        <taxon>Eukaryota</taxon>
        <taxon>Viridiplantae</taxon>
        <taxon>Streptophyta</taxon>
        <taxon>Embryophyta</taxon>
        <taxon>Tracheophyta</taxon>
        <taxon>Spermatophyta</taxon>
        <taxon>Magnoliopsida</taxon>
        <taxon>eudicotyledons</taxon>
        <taxon>Gunneridae</taxon>
        <taxon>Pentapetalae</taxon>
        <taxon>rosids</taxon>
        <taxon>malvids</taxon>
        <taxon>Brassicales</taxon>
        <taxon>Brassicaceae</taxon>
        <taxon>Camelineae</taxon>
        <taxon>Arabidopsis</taxon>
    </lineage>
</organism>
<accession>Q9LX66</accession>
<accession>Q9SNA7</accession>
<sequence length="830" mass="91468">MGIEKFETFILISTISILLCICHGFTPVDNYLINCGSPTNGTLMGRIFLSDKLSSKLLTSSKEILASVGGNSGSDIYHTARVFTEVSSYKFSVTRGRHWVRLYFNPFDYQNFKMGSAKFAVSSQSHVLLSDFTVTSSKVVKEYSLNVTTNDLVLTFTPSSGSFAFVNAIEVISIPDTLITGSPRFVGNPAQFPDMSMQGLETIHRVNMGGPLVASNNDTLTRTWVPDSEFLLEKNLAKSMSKFSTVNFVPGYATEDSAPRTVYGSCTEMNSADNPNSIFNVTWEFDVDPGFQYYFRFHFCDIVSLSLNQLYFNLYVDSMVAATDIDLSTLVDNTLAGAYSMDFVTQTPKGSNKVRVSIGPSTVHTDYPNAIVNGLEIMKMNNSKGQLSTGTFVPGSSSSSKSNLGLIVGSAIGSLLAVVFLGSCFVLYKKRKRGQDGHSKTWMPFSINGTSMGSKYSNGTTLTSITTNANYRIPFAAVKDATNNFDESRNIGVGGFGKVYKGELNDGTKVAVKRGNPKSQQGLAEFRTEIEMLSQFRHRHLVSLIGYCDENNEMILIYEYMENGTVKSHLYGSGLPSLTWKQRLEICIGAARGLHYLHTGDSKPVIHRDVKSANILLDENFMAKVADFGLSKTGPELDQTHVSTAVKGSFGYLDPEYFRRQQLTDKSDVYSFGVVLFEVLCARPVIDPTLPREMVNLAEWAMKWQKKGQLDQIIDQSLRGNIRPDSLRKFAETGEKCLADYGVDRPSMGDVLWNLEYALQLQEAVIDGEPEDNSTNMIGELPPQINNFSQGDTSVNVPGTAGRFEESSIDDLSGVSMSKVFSQLVKSEGR</sequence>